<comment type="function">
    <text evidence="1">Required for maturation of 30S ribosomal subunits.</text>
</comment>
<comment type="subcellular location">
    <subcellularLocation>
        <location evidence="1">Cytoplasm</location>
    </subcellularLocation>
</comment>
<comment type="similarity">
    <text evidence="1">Belongs to the RimP family.</text>
</comment>
<evidence type="ECO:0000255" key="1">
    <source>
        <dbReference type="HAMAP-Rule" id="MF_01077"/>
    </source>
</evidence>
<proteinExistence type="inferred from homology"/>
<protein>
    <recommendedName>
        <fullName evidence="1">Ribosome maturation factor RimP</fullName>
    </recommendedName>
</protein>
<name>RIMP_HELPH</name>
<organism>
    <name type="scientific">Helicobacter pylori (strain HPAG1)</name>
    <dbReference type="NCBI Taxonomy" id="357544"/>
    <lineage>
        <taxon>Bacteria</taxon>
        <taxon>Pseudomonadati</taxon>
        <taxon>Campylobacterota</taxon>
        <taxon>Epsilonproteobacteria</taxon>
        <taxon>Campylobacterales</taxon>
        <taxon>Helicobacteraceae</taxon>
        <taxon>Helicobacter</taxon>
    </lineage>
</organism>
<dbReference type="EMBL" id="CP000241">
    <property type="protein sequence ID" value="ABF84468.1"/>
    <property type="molecule type" value="Genomic_DNA"/>
</dbReference>
<dbReference type="RefSeq" id="WP_000162250.1">
    <property type="nucleotide sequence ID" value="NC_008086.1"/>
</dbReference>
<dbReference type="SMR" id="Q1CUA4"/>
<dbReference type="KEGG" id="hpa:HPAG1_0401"/>
<dbReference type="HOGENOM" id="CLU_070525_2_2_7"/>
<dbReference type="GO" id="GO:0005829">
    <property type="term" value="C:cytosol"/>
    <property type="evidence" value="ECO:0007669"/>
    <property type="project" value="TreeGrafter"/>
</dbReference>
<dbReference type="GO" id="GO:0000028">
    <property type="term" value="P:ribosomal small subunit assembly"/>
    <property type="evidence" value="ECO:0007669"/>
    <property type="project" value="TreeGrafter"/>
</dbReference>
<dbReference type="GO" id="GO:0006412">
    <property type="term" value="P:translation"/>
    <property type="evidence" value="ECO:0007669"/>
    <property type="project" value="TreeGrafter"/>
</dbReference>
<dbReference type="CDD" id="cd01734">
    <property type="entry name" value="YlxS_C"/>
    <property type="match status" value="1"/>
</dbReference>
<dbReference type="FunFam" id="3.30.300.70:FF:000005">
    <property type="entry name" value="Ribosome maturation factor RimP"/>
    <property type="match status" value="1"/>
</dbReference>
<dbReference type="Gene3D" id="3.30.300.70">
    <property type="entry name" value="RimP-like superfamily, N-terminal"/>
    <property type="match status" value="1"/>
</dbReference>
<dbReference type="HAMAP" id="MF_01077">
    <property type="entry name" value="RimP"/>
    <property type="match status" value="1"/>
</dbReference>
<dbReference type="InterPro" id="IPR003728">
    <property type="entry name" value="Ribosome_maturation_RimP"/>
</dbReference>
<dbReference type="InterPro" id="IPR028998">
    <property type="entry name" value="RimP_C"/>
</dbReference>
<dbReference type="InterPro" id="IPR028989">
    <property type="entry name" value="RimP_N"/>
</dbReference>
<dbReference type="InterPro" id="IPR035956">
    <property type="entry name" value="RimP_N_sf"/>
</dbReference>
<dbReference type="PANTHER" id="PTHR33867">
    <property type="entry name" value="RIBOSOME MATURATION FACTOR RIMP"/>
    <property type="match status" value="1"/>
</dbReference>
<dbReference type="PANTHER" id="PTHR33867:SF1">
    <property type="entry name" value="RIBOSOME MATURATION FACTOR RIMP"/>
    <property type="match status" value="1"/>
</dbReference>
<dbReference type="Pfam" id="PF17384">
    <property type="entry name" value="DUF150_C"/>
    <property type="match status" value="1"/>
</dbReference>
<dbReference type="Pfam" id="PF02576">
    <property type="entry name" value="RimP_N"/>
    <property type="match status" value="1"/>
</dbReference>
<dbReference type="SUPFAM" id="SSF75420">
    <property type="entry name" value="YhbC-like, N-terminal domain"/>
    <property type="match status" value="1"/>
</dbReference>
<accession>Q1CUA4</accession>
<feature type="chain" id="PRO_1000064720" description="Ribosome maturation factor RimP">
    <location>
        <begin position="1"/>
        <end position="146"/>
    </location>
</feature>
<sequence length="146" mass="16541">MTKKIEEKIEGVIESLGYLLYDVSLVKENEQHVLRVSLKNPNGAVSLDICQQVSEVISPLLDVCDFIQDAYILEVSSMGLERTLKTPKHFKLSLGEKVEVKLINKESFQAVLKDANDLSADFELEDHAIKSVGYKDLKKVKTLFEW</sequence>
<reference key="1">
    <citation type="journal article" date="2006" name="Proc. Natl. Acad. Sci. U.S.A.">
        <title>The complete genome sequence of a chronic atrophic gastritis Helicobacter pylori strain: evolution during disease progression.</title>
        <authorList>
            <person name="Oh J.D."/>
            <person name="Kling-Baeckhed H."/>
            <person name="Giannakis M."/>
            <person name="Xu J."/>
            <person name="Fulton R.S."/>
            <person name="Fulton L.A."/>
            <person name="Cordum H.S."/>
            <person name="Wang C."/>
            <person name="Elliott G."/>
            <person name="Edwards J."/>
            <person name="Mardis E.R."/>
            <person name="Engstrand L.G."/>
            <person name="Gordon J.I."/>
        </authorList>
    </citation>
    <scope>NUCLEOTIDE SEQUENCE [LARGE SCALE GENOMIC DNA]</scope>
    <source>
        <strain>HPAG1</strain>
    </source>
</reference>
<gene>
    <name evidence="1" type="primary">rimP</name>
    <name type="ordered locus">HPAG1_0401</name>
</gene>
<keyword id="KW-0963">Cytoplasm</keyword>
<keyword id="KW-0690">Ribosome biogenesis</keyword>